<evidence type="ECO:0000255" key="1">
    <source>
        <dbReference type="HAMAP-Rule" id="MF_01147"/>
    </source>
</evidence>
<gene>
    <name evidence="1" type="primary">lgt</name>
    <name type="ordered locus">CKL_2697</name>
</gene>
<organism>
    <name type="scientific">Clostridium kluyveri (strain ATCC 8527 / DSM 555 / NBRC 12016 / NCIMB 10680 / K1)</name>
    <dbReference type="NCBI Taxonomy" id="431943"/>
    <lineage>
        <taxon>Bacteria</taxon>
        <taxon>Bacillati</taxon>
        <taxon>Bacillota</taxon>
        <taxon>Clostridia</taxon>
        <taxon>Eubacteriales</taxon>
        <taxon>Clostridiaceae</taxon>
        <taxon>Clostridium</taxon>
    </lineage>
</organism>
<comment type="function">
    <text evidence="1">Catalyzes the transfer of the diacylglyceryl group from phosphatidylglycerol to the sulfhydryl group of the N-terminal cysteine of a prolipoprotein, the first step in the formation of mature lipoproteins.</text>
</comment>
<comment type="catalytic activity">
    <reaction evidence="1">
        <text>L-cysteinyl-[prolipoprotein] + a 1,2-diacyl-sn-glycero-3-phospho-(1'-sn-glycerol) = an S-1,2-diacyl-sn-glyceryl-L-cysteinyl-[prolipoprotein] + sn-glycerol 1-phosphate + H(+)</text>
        <dbReference type="Rhea" id="RHEA:56712"/>
        <dbReference type="Rhea" id="RHEA-COMP:14679"/>
        <dbReference type="Rhea" id="RHEA-COMP:14680"/>
        <dbReference type="ChEBI" id="CHEBI:15378"/>
        <dbReference type="ChEBI" id="CHEBI:29950"/>
        <dbReference type="ChEBI" id="CHEBI:57685"/>
        <dbReference type="ChEBI" id="CHEBI:64716"/>
        <dbReference type="ChEBI" id="CHEBI:140658"/>
        <dbReference type="EC" id="2.5.1.145"/>
    </reaction>
</comment>
<comment type="pathway">
    <text evidence="1">Protein modification; lipoprotein biosynthesis (diacylglyceryl transfer).</text>
</comment>
<comment type="subcellular location">
    <subcellularLocation>
        <location evidence="1">Cell membrane</location>
        <topology evidence="1">Multi-pass membrane protein</topology>
    </subcellularLocation>
</comment>
<comment type="similarity">
    <text evidence="1">Belongs to the Lgt family.</text>
</comment>
<feature type="chain" id="PRO_1000085070" description="Phosphatidylglycerol--prolipoprotein diacylglyceryl transferase">
    <location>
        <begin position="1"/>
        <end position="255"/>
    </location>
</feature>
<feature type="transmembrane region" description="Helical" evidence="1">
    <location>
        <begin position="15"/>
        <end position="35"/>
    </location>
</feature>
<feature type="transmembrane region" description="Helical" evidence="1">
    <location>
        <begin position="46"/>
        <end position="66"/>
    </location>
</feature>
<feature type="transmembrane region" description="Helical" evidence="1">
    <location>
        <begin position="84"/>
        <end position="104"/>
    </location>
</feature>
<feature type="transmembrane region" description="Helical" evidence="1">
    <location>
        <begin position="169"/>
        <end position="189"/>
    </location>
</feature>
<feature type="transmembrane region" description="Helical" evidence="1">
    <location>
        <begin position="196"/>
        <end position="216"/>
    </location>
</feature>
<feature type="transmembrane region" description="Helical" evidence="1">
    <location>
        <begin position="228"/>
        <end position="248"/>
    </location>
</feature>
<feature type="binding site" evidence="1">
    <location>
        <position position="130"/>
    </location>
    <ligand>
        <name>a 1,2-diacyl-sn-glycero-3-phospho-(1'-sn-glycerol)</name>
        <dbReference type="ChEBI" id="CHEBI:64716"/>
    </ligand>
</feature>
<dbReference type="EC" id="2.5.1.145" evidence="1"/>
<dbReference type="EMBL" id="CP000673">
    <property type="protein sequence ID" value="EDK34709.1"/>
    <property type="molecule type" value="Genomic_DNA"/>
</dbReference>
<dbReference type="RefSeq" id="WP_012103039.1">
    <property type="nucleotide sequence ID" value="NC_009706.1"/>
</dbReference>
<dbReference type="SMR" id="A5N0R3"/>
<dbReference type="STRING" id="431943.CKL_2697"/>
<dbReference type="KEGG" id="ckl:CKL_2697"/>
<dbReference type="eggNOG" id="COG0682">
    <property type="taxonomic scope" value="Bacteria"/>
</dbReference>
<dbReference type="HOGENOM" id="CLU_013386_0_1_9"/>
<dbReference type="UniPathway" id="UPA00664"/>
<dbReference type="Proteomes" id="UP000002411">
    <property type="component" value="Chromosome"/>
</dbReference>
<dbReference type="GO" id="GO:0005886">
    <property type="term" value="C:plasma membrane"/>
    <property type="evidence" value="ECO:0007669"/>
    <property type="project" value="UniProtKB-SubCell"/>
</dbReference>
<dbReference type="GO" id="GO:0008961">
    <property type="term" value="F:phosphatidylglycerol-prolipoprotein diacylglyceryl transferase activity"/>
    <property type="evidence" value="ECO:0007669"/>
    <property type="project" value="UniProtKB-UniRule"/>
</dbReference>
<dbReference type="GO" id="GO:0042158">
    <property type="term" value="P:lipoprotein biosynthetic process"/>
    <property type="evidence" value="ECO:0007669"/>
    <property type="project" value="UniProtKB-UniRule"/>
</dbReference>
<dbReference type="HAMAP" id="MF_01147">
    <property type="entry name" value="Lgt"/>
    <property type="match status" value="1"/>
</dbReference>
<dbReference type="InterPro" id="IPR001640">
    <property type="entry name" value="Lgt"/>
</dbReference>
<dbReference type="NCBIfam" id="TIGR00544">
    <property type="entry name" value="lgt"/>
    <property type="match status" value="1"/>
</dbReference>
<dbReference type="PANTHER" id="PTHR30589:SF0">
    <property type="entry name" value="PHOSPHATIDYLGLYCEROL--PROLIPOPROTEIN DIACYLGLYCERYL TRANSFERASE"/>
    <property type="match status" value="1"/>
</dbReference>
<dbReference type="PANTHER" id="PTHR30589">
    <property type="entry name" value="PROLIPOPROTEIN DIACYLGLYCERYL TRANSFERASE"/>
    <property type="match status" value="1"/>
</dbReference>
<dbReference type="Pfam" id="PF01790">
    <property type="entry name" value="LGT"/>
    <property type="match status" value="1"/>
</dbReference>
<dbReference type="PROSITE" id="PS01311">
    <property type="entry name" value="LGT"/>
    <property type="match status" value="1"/>
</dbReference>
<keyword id="KW-1003">Cell membrane</keyword>
<keyword id="KW-0472">Membrane</keyword>
<keyword id="KW-1185">Reference proteome</keyword>
<keyword id="KW-0808">Transferase</keyword>
<keyword id="KW-0812">Transmembrane</keyword>
<keyword id="KW-1133">Transmembrane helix</keyword>
<reference key="1">
    <citation type="journal article" date="2008" name="Proc. Natl. Acad. Sci. U.S.A.">
        <title>The genome of Clostridium kluyveri, a strict anaerobe with unique metabolic features.</title>
        <authorList>
            <person name="Seedorf H."/>
            <person name="Fricke W.F."/>
            <person name="Veith B."/>
            <person name="Brueggemann H."/>
            <person name="Liesegang H."/>
            <person name="Strittmatter A."/>
            <person name="Miethke M."/>
            <person name="Buckel W."/>
            <person name="Hinderberger J."/>
            <person name="Li F."/>
            <person name="Hagemeier C."/>
            <person name="Thauer R.K."/>
            <person name="Gottschalk G."/>
        </authorList>
    </citation>
    <scope>NUCLEOTIDE SEQUENCE [LARGE SCALE GENOMIC DNA]</scope>
    <source>
        <strain>ATCC 8527 / DSM 555 / NBRC 12016 / NCIMB 10680 / K1</strain>
    </source>
</reference>
<protein>
    <recommendedName>
        <fullName evidence="1">Phosphatidylglycerol--prolipoprotein diacylglyceryl transferase</fullName>
        <ecNumber evidence="1">2.5.1.145</ecNumber>
    </recommendedName>
</protein>
<sequence length="255" mass="29060">MDPIAFSIGGFQIRWYGIMIALGVLAALILANLNCRYKGYNFDSLIDVFLISFPLAIIGARVYYVVFQFQDYRNNLMDIFNIRLGGLAIHGGIIFGLGAAYIVSRYKKMDFIKLWDCFAPSIILGQAIGRWGNFFNGEAHGGIVGYEFISKFPLFIQRGMYINGDYYNPTFLYESLWDLIVCIILVYIFRKKHKRGTVICTYVGLYSLGRFFIEGLRTDSLMIGHIRVAQLVSFIGIVLSISFFVYLKGRGKRVD</sequence>
<accession>A5N0R3</accession>
<name>LGT_CLOK5</name>
<proteinExistence type="inferred from homology"/>